<name>SUCC_MYCBP</name>
<evidence type="ECO:0000255" key="1">
    <source>
        <dbReference type="HAMAP-Rule" id="MF_00558"/>
    </source>
</evidence>
<dbReference type="EC" id="6.2.1.5" evidence="1"/>
<dbReference type="EMBL" id="AM408590">
    <property type="protein sequence ID" value="CAL70991.1"/>
    <property type="molecule type" value="Genomic_DNA"/>
</dbReference>
<dbReference type="RefSeq" id="WP_003404866.1">
    <property type="nucleotide sequence ID" value="NC_008769.1"/>
</dbReference>
<dbReference type="SMR" id="A1KH85"/>
<dbReference type="KEGG" id="mbb:BCG_1005"/>
<dbReference type="HOGENOM" id="CLU_037430_4_0_11"/>
<dbReference type="UniPathway" id="UPA00223">
    <property type="reaction ID" value="UER00999"/>
</dbReference>
<dbReference type="Proteomes" id="UP000001472">
    <property type="component" value="Chromosome"/>
</dbReference>
<dbReference type="GO" id="GO:0005829">
    <property type="term" value="C:cytosol"/>
    <property type="evidence" value="ECO:0007669"/>
    <property type="project" value="TreeGrafter"/>
</dbReference>
<dbReference type="GO" id="GO:0042709">
    <property type="term" value="C:succinate-CoA ligase complex"/>
    <property type="evidence" value="ECO:0007669"/>
    <property type="project" value="TreeGrafter"/>
</dbReference>
<dbReference type="GO" id="GO:0005524">
    <property type="term" value="F:ATP binding"/>
    <property type="evidence" value="ECO:0007669"/>
    <property type="project" value="UniProtKB-UniRule"/>
</dbReference>
<dbReference type="GO" id="GO:0000287">
    <property type="term" value="F:magnesium ion binding"/>
    <property type="evidence" value="ECO:0007669"/>
    <property type="project" value="UniProtKB-UniRule"/>
</dbReference>
<dbReference type="GO" id="GO:0004775">
    <property type="term" value="F:succinate-CoA ligase (ADP-forming) activity"/>
    <property type="evidence" value="ECO:0007669"/>
    <property type="project" value="UniProtKB-UniRule"/>
</dbReference>
<dbReference type="GO" id="GO:0004776">
    <property type="term" value="F:succinate-CoA ligase (GDP-forming) activity"/>
    <property type="evidence" value="ECO:0007669"/>
    <property type="project" value="RHEA"/>
</dbReference>
<dbReference type="GO" id="GO:0006104">
    <property type="term" value="P:succinyl-CoA metabolic process"/>
    <property type="evidence" value="ECO:0007669"/>
    <property type="project" value="TreeGrafter"/>
</dbReference>
<dbReference type="GO" id="GO:0006099">
    <property type="term" value="P:tricarboxylic acid cycle"/>
    <property type="evidence" value="ECO:0007669"/>
    <property type="project" value="UniProtKB-UniRule"/>
</dbReference>
<dbReference type="FunFam" id="3.30.1490.20:FF:000014">
    <property type="entry name" value="Succinate--CoA ligase [ADP-forming] subunit beta"/>
    <property type="match status" value="1"/>
</dbReference>
<dbReference type="FunFam" id="3.30.470.20:FF:000002">
    <property type="entry name" value="Succinate--CoA ligase [ADP-forming] subunit beta"/>
    <property type="match status" value="1"/>
</dbReference>
<dbReference type="FunFam" id="3.40.50.261:FF:000007">
    <property type="entry name" value="Succinate--CoA ligase [ADP-forming] subunit beta"/>
    <property type="match status" value="1"/>
</dbReference>
<dbReference type="Gene3D" id="3.30.1490.20">
    <property type="entry name" value="ATP-grasp fold, A domain"/>
    <property type="match status" value="1"/>
</dbReference>
<dbReference type="Gene3D" id="3.30.470.20">
    <property type="entry name" value="ATP-grasp fold, B domain"/>
    <property type="match status" value="1"/>
</dbReference>
<dbReference type="Gene3D" id="3.40.50.261">
    <property type="entry name" value="Succinyl-CoA synthetase domains"/>
    <property type="match status" value="1"/>
</dbReference>
<dbReference type="HAMAP" id="MF_00558">
    <property type="entry name" value="Succ_CoA_beta"/>
    <property type="match status" value="1"/>
</dbReference>
<dbReference type="InterPro" id="IPR011761">
    <property type="entry name" value="ATP-grasp"/>
</dbReference>
<dbReference type="InterPro" id="IPR013650">
    <property type="entry name" value="ATP-grasp_succ-CoA_synth-type"/>
</dbReference>
<dbReference type="InterPro" id="IPR013815">
    <property type="entry name" value="ATP_grasp_subdomain_1"/>
</dbReference>
<dbReference type="InterPro" id="IPR017866">
    <property type="entry name" value="Succ-CoA_synthase_bsu_CS"/>
</dbReference>
<dbReference type="InterPro" id="IPR005811">
    <property type="entry name" value="SUCC_ACL_C"/>
</dbReference>
<dbReference type="InterPro" id="IPR005809">
    <property type="entry name" value="Succ_CoA_ligase-like_bsu"/>
</dbReference>
<dbReference type="InterPro" id="IPR016102">
    <property type="entry name" value="Succinyl-CoA_synth-like"/>
</dbReference>
<dbReference type="NCBIfam" id="NF001913">
    <property type="entry name" value="PRK00696.1"/>
    <property type="match status" value="1"/>
</dbReference>
<dbReference type="NCBIfam" id="TIGR01016">
    <property type="entry name" value="sucCoAbeta"/>
    <property type="match status" value="1"/>
</dbReference>
<dbReference type="PANTHER" id="PTHR11815:SF10">
    <property type="entry name" value="SUCCINATE--COA LIGASE [GDP-FORMING] SUBUNIT BETA, MITOCHONDRIAL"/>
    <property type="match status" value="1"/>
</dbReference>
<dbReference type="PANTHER" id="PTHR11815">
    <property type="entry name" value="SUCCINYL-COA SYNTHETASE BETA CHAIN"/>
    <property type="match status" value="1"/>
</dbReference>
<dbReference type="Pfam" id="PF08442">
    <property type="entry name" value="ATP-grasp_2"/>
    <property type="match status" value="1"/>
</dbReference>
<dbReference type="Pfam" id="PF00549">
    <property type="entry name" value="Ligase_CoA"/>
    <property type="match status" value="1"/>
</dbReference>
<dbReference type="PIRSF" id="PIRSF001554">
    <property type="entry name" value="SucCS_beta"/>
    <property type="match status" value="1"/>
</dbReference>
<dbReference type="SUPFAM" id="SSF56059">
    <property type="entry name" value="Glutathione synthetase ATP-binding domain-like"/>
    <property type="match status" value="1"/>
</dbReference>
<dbReference type="SUPFAM" id="SSF52210">
    <property type="entry name" value="Succinyl-CoA synthetase domains"/>
    <property type="match status" value="1"/>
</dbReference>
<dbReference type="PROSITE" id="PS50975">
    <property type="entry name" value="ATP_GRASP"/>
    <property type="match status" value="1"/>
</dbReference>
<dbReference type="PROSITE" id="PS01217">
    <property type="entry name" value="SUCCINYL_COA_LIG_3"/>
    <property type="match status" value="1"/>
</dbReference>
<sequence>MDLFEYQAKELFAKHNVPSTPGRVTDTAEGAKAIATEIGRPVMVKAQVKIGGRGKAGGVKYAATPQDAYEHAKNILGLDIKGHIVKKLLVAEASDIAEEYYLSFLLDRANRTYLAMCSVEGGMEIEEVAATKPERLAKVPVNAVKGVDLDFARSIAEQGHLPAEVLDTAAVTIAKLWELFVAEDATLVEVNPLVRTPDHKILALDAKITLDGNADFRQPGHAEFEDRAATDPLELKAKEHDLNYVKLDGQVGIIGNGAGLAMSTLDVVAYAGEKHGGVKPANFLDIGGGASAEVMAAGLDVVLGDQQVKSVFVNVFGGITSCDAVATGIVKALGMLGDEANKPLVVRLDGNNVEEGRRILTEANHPLVTLVATMDEAADKAAELASA</sequence>
<keyword id="KW-0067">ATP-binding</keyword>
<keyword id="KW-0436">Ligase</keyword>
<keyword id="KW-0460">Magnesium</keyword>
<keyword id="KW-0479">Metal-binding</keyword>
<keyword id="KW-0547">Nucleotide-binding</keyword>
<keyword id="KW-0816">Tricarboxylic acid cycle</keyword>
<organism>
    <name type="scientific">Mycobacterium bovis (strain BCG / Pasteur 1173P2)</name>
    <dbReference type="NCBI Taxonomy" id="410289"/>
    <lineage>
        <taxon>Bacteria</taxon>
        <taxon>Bacillati</taxon>
        <taxon>Actinomycetota</taxon>
        <taxon>Actinomycetes</taxon>
        <taxon>Mycobacteriales</taxon>
        <taxon>Mycobacteriaceae</taxon>
        <taxon>Mycobacterium</taxon>
        <taxon>Mycobacterium tuberculosis complex</taxon>
    </lineage>
</organism>
<proteinExistence type="inferred from homology"/>
<gene>
    <name evidence="1" type="primary">sucC</name>
    <name type="ordered locus">BCG_1005</name>
</gene>
<comment type="function">
    <text evidence="1">Succinyl-CoA synthetase functions in the citric acid cycle (TCA), coupling the hydrolysis of succinyl-CoA to the synthesis of either ATP or GTP and thus represents the only step of substrate-level phosphorylation in the TCA. The beta subunit provides nucleotide specificity of the enzyme and binds the substrate succinate, while the binding sites for coenzyme A and phosphate are found in the alpha subunit.</text>
</comment>
<comment type="catalytic activity">
    <reaction evidence="1">
        <text>succinate + ATP + CoA = succinyl-CoA + ADP + phosphate</text>
        <dbReference type="Rhea" id="RHEA:17661"/>
        <dbReference type="ChEBI" id="CHEBI:30031"/>
        <dbReference type="ChEBI" id="CHEBI:30616"/>
        <dbReference type="ChEBI" id="CHEBI:43474"/>
        <dbReference type="ChEBI" id="CHEBI:57287"/>
        <dbReference type="ChEBI" id="CHEBI:57292"/>
        <dbReference type="ChEBI" id="CHEBI:456216"/>
        <dbReference type="EC" id="6.2.1.5"/>
    </reaction>
    <physiologicalReaction direction="right-to-left" evidence="1">
        <dbReference type="Rhea" id="RHEA:17663"/>
    </physiologicalReaction>
</comment>
<comment type="catalytic activity">
    <reaction evidence="1">
        <text>GTP + succinate + CoA = succinyl-CoA + GDP + phosphate</text>
        <dbReference type="Rhea" id="RHEA:22120"/>
        <dbReference type="ChEBI" id="CHEBI:30031"/>
        <dbReference type="ChEBI" id="CHEBI:37565"/>
        <dbReference type="ChEBI" id="CHEBI:43474"/>
        <dbReference type="ChEBI" id="CHEBI:57287"/>
        <dbReference type="ChEBI" id="CHEBI:57292"/>
        <dbReference type="ChEBI" id="CHEBI:58189"/>
    </reaction>
    <physiologicalReaction direction="right-to-left" evidence="1">
        <dbReference type="Rhea" id="RHEA:22122"/>
    </physiologicalReaction>
</comment>
<comment type="cofactor">
    <cofactor evidence="1">
        <name>Mg(2+)</name>
        <dbReference type="ChEBI" id="CHEBI:18420"/>
    </cofactor>
    <text evidence="1">Binds 1 Mg(2+) ion per subunit.</text>
</comment>
<comment type="pathway">
    <text evidence="1">Carbohydrate metabolism; tricarboxylic acid cycle; succinate from succinyl-CoA (ligase route): step 1/1.</text>
</comment>
<comment type="subunit">
    <text evidence="1">Heterotetramer of two alpha and two beta subunits.</text>
</comment>
<comment type="similarity">
    <text evidence="1">Belongs to the succinate/malate CoA ligase beta subunit family.</text>
</comment>
<reference key="1">
    <citation type="journal article" date="2007" name="Proc. Natl. Acad. Sci. U.S.A.">
        <title>Genome plasticity of BCG and impact on vaccine efficacy.</title>
        <authorList>
            <person name="Brosch R."/>
            <person name="Gordon S.V."/>
            <person name="Garnier T."/>
            <person name="Eiglmeier K."/>
            <person name="Frigui W."/>
            <person name="Valenti P."/>
            <person name="Dos Santos S."/>
            <person name="Duthoy S."/>
            <person name="Lacroix C."/>
            <person name="Garcia-Pelayo C."/>
            <person name="Inwald J.K."/>
            <person name="Golby P."/>
            <person name="Garcia J.N."/>
            <person name="Hewinson R.G."/>
            <person name="Behr M.A."/>
            <person name="Quail M.A."/>
            <person name="Churcher C."/>
            <person name="Barrell B.G."/>
            <person name="Parkhill J."/>
            <person name="Cole S.T."/>
        </authorList>
    </citation>
    <scope>NUCLEOTIDE SEQUENCE [LARGE SCALE GENOMIC DNA]</scope>
    <source>
        <strain>BCG / Pasteur 1173P2</strain>
    </source>
</reference>
<accession>A1KH85</accession>
<protein>
    <recommendedName>
        <fullName evidence="1">Succinate--CoA ligase [ADP-forming] subunit beta</fullName>
        <ecNumber evidence="1">6.2.1.5</ecNumber>
    </recommendedName>
    <alternativeName>
        <fullName evidence="1">Succinyl-CoA synthetase subunit beta</fullName>
        <shortName evidence="1">SCS-beta</shortName>
    </alternativeName>
</protein>
<feature type="chain" id="PRO_1000082126" description="Succinate--CoA ligase [ADP-forming] subunit beta">
    <location>
        <begin position="1"/>
        <end position="387"/>
    </location>
</feature>
<feature type="domain" description="ATP-grasp" evidence="1">
    <location>
        <begin position="9"/>
        <end position="236"/>
    </location>
</feature>
<feature type="binding site" evidence="1">
    <location>
        <position position="45"/>
    </location>
    <ligand>
        <name>ATP</name>
        <dbReference type="ChEBI" id="CHEBI:30616"/>
    </ligand>
</feature>
<feature type="binding site" evidence="1">
    <location>
        <begin position="52"/>
        <end position="54"/>
    </location>
    <ligand>
        <name>ATP</name>
        <dbReference type="ChEBI" id="CHEBI:30616"/>
    </ligand>
</feature>
<feature type="binding site" evidence="1">
    <location>
        <position position="94"/>
    </location>
    <ligand>
        <name>ATP</name>
        <dbReference type="ChEBI" id="CHEBI:30616"/>
    </ligand>
</feature>
<feature type="binding site" evidence="1">
    <location>
        <position position="99"/>
    </location>
    <ligand>
        <name>ATP</name>
        <dbReference type="ChEBI" id="CHEBI:30616"/>
    </ligand>
</feature>
<feature type="binding site" evidence="1">
    <location>
        <position position="191"/>
    </location>
    <ligand>
        <name>Mg(2+)</name>
        <dbReference type="ChEBI" id="CHEBI:18420"/>
    </ligand>
</feature>
<feature type="binding site" evidence="1">
    <location>
        <position position="205"/>
    </location>
    <ligand>
        <name>Mg(2+)</name>
        <dbReference type="ChEBI" id="CHEBI:18420"/>
    </ligand>
</feature>
<feature type="binding site" evidence="1">
    <location>
        <position position="256"/>
    </location>
    <ligand>
        <name>substrate</name>
        <note>ligand shared with subunit alpha</note>
    </ligand>
</feature>
<feature type="binding site" evidence="1">
    <location>
        <begin position="318"/>
        <end position="320"/>
    </location>
    <ligand>
        <name>substrate</name>
        <note>ligand shared with subunit alpha</note>
    </ligand>
</feature>